<reference key="1">
    <citation type="journal article" date="2003" name="Proc. Natl. Acad. Sci. U.S.A.">
        <title>The genome of Nanoarchaeum equitans: insights into early archaeal evolution and derived parasitism.</title>
        <authorList>
            <person name="Waters E."/>
            <person name="Hohn M.J."/>
            <person name="Ahel I."/>
            <person name="Graham D.E."/>
            <person name="Adams M.D."/>
            <person name="Barnstead M."/>
            <person name="Beeson K.Y."/>
            <person name="Bibbs L."/>
            <person name="Bolanos R."/>
            <person name="Keller M."/>
            <person name="Kretz K."/>
            <person name="Lin X."/>
            <person name="Mathur E."/>
            <person name="Ni J."/>
            <person name="Podar M."/>
            <person name="Richardson T."/>
            <person name="Sutton G.G."/>
            <person name="Simon M."/>
            <person name="Soell D."/>
            <person name="Stetter K.O."/>
            <person name="Short J.M."/>
            <person name="Noorderwier M."/>
        </authorList>
    </citation>
    <scope>NUCLEOTIDE SEQUENCE [LARGE SCALE GENOMIC DNA]</scope>
    <source>
        <strain>Kin4-M</strain>
    </source>
</reference>
<keyword id="KW-1185">Reference proteome</keyword>
<keyword id="KW-0687">Ribonucleoprotein</keyword>
<keyword id="KW-0689">Ribosomal protein</keyword>
<keyword id="KW-0694">RNA-binding</keyword>
<keyword id="KW-0699">rRNA-binding</keyword>
<dbReference type="EMBL" id="AE017199">
    <property type="protein sequence ID" value="AAR39209.1"/>
    <property type="molecule type" value="Genomic_DNA"/>
</dbReference>
<dbReference type="SMR" id="P60408"/>
<dbReference type="STRING" id="228908.NEQ361"/>
<dbReference type="EnsemblBacteria" id="AAR39209">
    <property type="protein sequence ID" value="AAR39209"/>
    <property type="gene ID" value="NEQ361"/>
</dbReference>
<dbReference type="KEGG" id="neq:NEQ361"/>
<dbReference type="PATRIC" id="fig|228908.8.peg.370"/>
<dbReference type="HOGENOM" id="CLU_036235_0_1_2"/>
<dbReference type="Proteomes" id="UP000000578">
    <property type="component" value="Chromosome"/>
</dbReference>
<dbReference type="GO" id="GO:0022625">
    <property type="term" value="C:cytosolic large ribosomal subunit"/>
    <property type="evidence" value="ECO:0007669"/>
    <property type="project" value="TreeGrafter"/>
</dbReference>
<dbReference type="GO" id="GO:0019843">
    <property type="term" value="F:rRNA binding"/>
    <property type="evidence" value="ECO:0007669"/>
    <property type="project" value="UniProtKB-UniRule"/>
</dbReference>
<dbReference type="GO" id="GO:0003735">
    <property type="term" value="F:structural constituent of ribosome"/>
    <property type="evidence" value="ECO:0007669"/>
    <property type="project" value="InterPro"/>
</dbReference>
<dbReference type="GO" id="GO:0002181">
    <property type="term" value="P:cytoplasmic translation"/>
    <property type="evidence" value="ECO:0007669"/>
    <property type="project" value="TreeGrafter"/>
</dbReference>
<dbReference type="Gene3D" id="2.30.30.30">
    <property type="match status" value="1"/>
</dbReference>
<dbReference type="Gene3D" id="2.40.50.140">
    <property type="entry name" value="Nucleic acid-binding proteins"/>
    <property type="match status" value="1"/>
</dbReference>
<dbReference type="Gene3D" id="4.10.950.10">
    <property type="entry name" value="Ribosomal protein L2, domain 3"/>
    <property type="match status" value="1"/>
</dbReference>
<dbReference type="HAMAP" id="MF_01320_A">
    <property type="entry name" value="Ribosomal_uL2_A"/>
    <property type="match status" value="1"/>
</dbReference>
<dbReference type="InterPro" id="IPR012340">
    <property type="entry name" value="NA-bd_OB-fold"/>
</dbReference>
<dbReference type="InterPro" id="IPR014722">
    <property type="entry name" value="Rib_uL2_dom2"/>
</dbReference>
<dbReference type="InterPro" id="IPR002171">
    <property type="entry name" value="Ribosomal_uL2"/>
</dbReference>
<dbReference type="InterPro" id="IPR023672">
    <property type="entry name" value="Ribosomal_uL2_arc_euk"/>
</dbReference>
<dbReference type="InterPro" id="IPR022669">
    <property type="entry name" value="Ribosomal_uL2_C"/>
</dbReference>
<dbReference type="InterPro" id="IPR014726">
    <property type="entry name" value="Ribosomal_uL2_dom3"/>
</dbReference>
<dbReference type="InterPro" id="IPR022666">
    <property type="entry name" value="Ribosomal_uL2_RNA-bd_dom"/>
</dbReference>
<dbReference type="InterPro" id="IPR008991">
    <property type="entry name" value="Translation_prot_SH3-like_sf"/>
</dbReference>
<dbReference type="NCBIfam" id="NF007180">
    <property type="entry name" value="PRK09612.1"/>
    <property type="match status" value="1"/>
</dbReference>
<dbReference type="PANTHER" id="PTHR13691:SF16">
    <property type="entry name" value="LARGE RIBOSOMAL SUBUNIT PROTEIN UL2"/>
    <property type="match status" value="1"/>
</dbReference>
<dbReference type="PANTHER" id="PTHR13691">
    <property type="entry name" value="RIBOSOMAL PROTEIN L2"/>
    <property type="match status" value="1"/>
</dbReference>
<dbReference type="Pfam" id="PF00181">
    <property type="entry name" value="Ribosomal_L2"/>
    <property type="match status" value="1"/>
</dbReference>
<dbReference type="Pfam" id="PF03947">
    <property type="entry name" value="Ribosomal_L2_C"/>
    <property type="match status" value="1"/>
</dbReference>
<dbReference type="PIRSF" id="PIRSF002158">
    <property type="entry name" value="Ribosomal_L2"/>
    <property type="match status" value="1"/>
</dbReference>
<dbReference type="SMART" id="SM01383">
    <property type="entry name" value="Ribosomal_L2"/>
    <property type="match status" value="1"/>
</dbReference>
<dbReference type="SMART" id="SM01382">
    <property type="entry name" value="Ribosomal_L2_C"/>
    <property type="match status" value="1"/>
</dbReference>
<dbReference type="SUPFAM" id="SSF50249">
    <property type="entry name" value="Nucleic acid-binding proteins"/>
    <property type="match status" value="1"/>
</dbReference>
<dbReference type="SUPFAM" id="SSF50104">
    <property type="entry name" value="Translation proteins SH3-like domain"/>
    <property type="match status" value="1"/>
</dbReference>
<feature type="chain" id="PRO_0000129720" description="Large ribosomal subunit protein uL2">
    <location>
        <begin position="1"/>
        <end position="238"/>
    </location>
</feature>
<feature type="region of interest" description="Disordered" evidence="2">
    <location>
        <begin position="197"/>
        <end position="219"/>
    </location>
</feature>
<evidence type="ECO:0000255" key="1">
    <source>
        <dbReference type="HAMAP-Rule" id="MF_01320"/>
    </source>
</evidence>
<evidence type="ECO:0000256" key="2">
    <source>
        <dbReference type="SAM" id="MobiDB-lite"/>
    </source>
</evidence>
<evidence type="ECO:0000305" key="3"/>
<protein>
    <recommendedName>
        <fullName evidence="1">Large ribosomal subunit protein uL2</fullName>
    </recommendedName>
    <alternativeName>
        <fullName evidence="3">50S ribosomal protein L2</fullName>
    </alternativeName>
</protein>
<accession>P60408</accession>
<comment type="function">
    <text evidence="1">One of the primary rRNA binding proteins. Required for association of the 30S and 50S subunits to form the 70S ribosome, for tRNA binding and peptide bond formation. It has been suggested to have peptidyltransferase activity; this is somewhat controversial. Makes several contacts with the 16S rRNA in the 70S ribosome.</text>
</comment>
<comment type="subunit">
    <text evidence="1">Part of the 50S ribosomal subunit. Forms a bridge to the 30S subunit in the 70S ribosome.</text>
</comment>
<comment type="similarity">
    <text evidence="1">Belongs to the universal ribosomal protein uL2 family.</text>
</comment>
<proteinExistence type="inferred from homology"/>
<organism>
    <name type="scientific">Nanoarchaeum equitans (strain Kin4-M)</name>
    <dbReference type="NCBI Taxonomy" id="228908"/>
    <lineage>
        <taxon>Archaea</taxon>
        <taxon>Nanobdellota</taxon>
        <taxon>Candidatus Nanoarchaeia</taxon>
        <taxon>Nanoarchaeales</taxon>
        <taxon>Nanoarchaeaceae</taxon>
        <taxon>Nanoarchaeum</taxon>
    </lineage>
</organism>
<gene>
    <name evidence="1" type="primary">rpl2</name>
    <name type="ordered locus">NEQ361</name>
</gene>
<name>RL2_NANEQ</name>
<sequence>MGKVRLLVQRRGRGSPTFRSPTHRAAGKVKIPTFDGDLVKGKVVALIKDSIHYAPLMVVKWENGAQSLLPAPLGISVGDTVYYGKEAPNAIGSIKPLSEIPEGTKIYMLENNPGDGGKLVRASGDFALLVQKLGDKVIVQLPSGQFKTLSANARAVIGVIAGGGRKEKPFVKAGNKYYWASSRNRHWPVVNGVKKNASDHPFGGKRHSNHSKPFTVSKWAPPGRKVGYIGARKTGRGK</sequence>